<reference key="1">
    <citation type="submission" date="2007-07" db="EMBL/GenBank/DDBJ databases">
        <title>Complete sequence of chromosome of Shewanella baltica OS185.</title>
        <authorList>
            <consortium name="US DOE Joint Genome Institute"/>
            <person name="Copeland A."/>
            <person name="Lucas S."/>
            <person name="Lapidus A."/>
            <person name="Barry K."/>
            <person name="Glavina del Rio T."/>
            <person name="Dalin E."/>
            <person name="Tice H."/>
            <person name="Pitluck S."/>
            <person name="Sims D."/>
            <person name="Brettin T."/>
            <person name="Bruce D."/>
            <person name="Detter J.C."/>
            <person name="Han C."/>
            <person name="Schmutz J."/>
            <person name="Larimer F."/>
            <person name="Land M."/>
            <person name="Hauser L."/>
            <person name="Kyrpides N."/>
            <person name="Mikhailova N."/>
            <person name="Brettar I."/>
            <person name="Rodrigues J."/>
            <person name="Konstantinidis K."/>
            <person name="Tiedje J."/>
            <person name="Richardson P."/>
        </authorList>
    </citation>
    <scope>NUCLEOTIDE SEQUENCE [LARGE SCALE GENOMIC DNA]</scope>
    <source>
        <strain>OS185</strain>
    </source>
</reference>
<protein>
    <recommendedName>
        <fullName evidence="1">Phosphopentomutase</fullName>
        <ecNumber evidence="1">5.4.2.7</ecNumber>
    </recommendedName>
    <alternativeName>
        <fullName evidence="1">Phosphodeoxyribomutase</fullName>
    </alternativeName>
</protein>
<dbReference type="EC" id="5.4.2.7" evidence="1"/>
<dbReference type="EMBL" id="CP000753">
    <property type="protein sequence ID" value="ABS09355.1"/>
    <property type="molecule type" value="Genomic_DNA"/>
</dbReference>
<dbReference type="RefSeq" id="WP_012089876.1">
    <property type="nucleotide sequence ID" value="NC_009665.1"/>
</dbReference>
<dbReference type="SMR" id="A6WRB6"/>
<dbReference type="KEGG" id="sbm:Shew185_3228"/>
<dbReference type="HOGENOM" id="CLU_053861_0_0_6"/>
<dbReference type="UniPathway" id="UPA00002">
    <property type="reaction ID" value="UER00467"/>
</dbReference>
<dbReference type="GO" id="GO:0005829">
    <property type="term" value="C:cytosol"/>
    <property type="evidence" value="ECO:0007669"/>
    <property type="project" value="TreeGrafter"/>
</dbReference>
<dbReference type="GO" id="GO:0000287">
    <property type="term" value="F:magnesium ion binding"/>
    <property type="evidence" value="ECO:0007669"/>
    <property type="project" value="InterPro"/>
</dbReference>
<dbReference type="GO" id="GO:0030145">
    <property type="term" value="F:manganese ion binding"/>
    <property type="evidence" value="ECO:0007669"/>
    <property type="project" value="UniProtKB-UniRule"/>
</dbReference>
<dbReference type="GO" id="GO:0008973">
    <property type="term" value="F:phosphopentomutase activity"/>
    <property type="evidence" value="ECO:0007669"/>
    <property type="project" value="UniProtKB-UniRule"/>
</dbReference>
<dbReference type="GO" id="GO:0006018">
    <property type="term" value="P:2-deoxyribose 1-phosphate catabolic process"/>
    <property type="evidence" value="ECO:0007669"/>
    <property type="project" value="UniProtKB-UniRule"/>
</dbReference>
<dbReference type="GO" id="GO:0006015">
    <property type="term" value="P:5-phosphoribose 1-diphosphate biosynthetic process"/>
    <property type="evidence" value="ECO:0007669"/>
    <property type="project" value="UniProtKB-UniPathway"/>
</dbReference>
<dbReference type="GO" id="GO:0043094">
    <property type="term" value="P:metabolic compound salvage"/>
    <property type="evidence" value="ECO:0007669"/>
    <property type="project" value="InterPro"/>
</dbReference>
<dbReference type="GO" id="GO:0009117">
    <property type="term" value="P:nucleotide metabolic process"/>
    <property type="evidence" value="ECO:0007669"/>
    <property type="project" value="InterPro"/>
</dbReference>
<dbReference type="CDD" id="cd16009">
    <property type="entry name" value="PPM"/>
    <property type="match status" value="1"/>
</dbReference>
<dbReference type="FunFam" id="3.30.70.1250:FF:000001">
    <property type="entry name" value="Phosphopentomutase"/>
    <property type="match status" value="1"/>
</dbReference>
<dbReference type="Gene3D" id="3.40.720.10">
    <property type="entry name" value="Alkaline Phosphatase, subunit A"/>
    <property type="match status" value="1"/>
</dbReference>
<dbReference type="Gene3D" id="3.30.70.1250">
    <property type="entry name" value="Phosphopentomutase"/>
    <property type="match status" value="1"/>
</dbReference>
<dbReference type="HAMAP" id="MF_00740">
    <property type="entry name" value="Phosphopentomut"/>
    <property type="match status" value="1"/>
</dbReference>
<dbReference type="InterPro" id="IPR017850">
    <property type="entry name" value="Alkaline_phosphatase_core_sf"/>
</dbReference>
<dbReference type="InterPro" id="IPR010045">
    <property type="entry name" value="DeoB"/>
</dbReference>
<dbReference type="InterPro" id="IPR006124">
    <property type="entry name" value="Metalloenzyme"/>
</dbReference>
<dbReference type="InterPro" id="IPR024052">
    <property type="entry name" value="Phosphopentomutase_DeoB_cap_sf"/>
</dbReference>
<dbReference type="NCBIfam" id="TIGR01696">
    <property type="entry name" value="deoB"/>
    <property type="match status" value="1"/>
</dbReference>
<dbReference type="NCBIfam" id="NF003766">
    <property type="entry name" value="PRK05362.1"/>
    <property type="match status" value="1"/>
</dbReference>
<dbReference type="PANTHER" id="PTHR21110">
    <property type="entry name" value="PHOSPHOPENTOMUTASE"/>
    <property type="match status" value="1"/>
</dbReference>
<dbReference type="PANTHER" id="PTHR21110:SF0">
    <property type="entry name" value="PHOSPHOPENTOMUTASE"/>
    <property type="match status" value="1"/>
</dbReference>
<dbReference type="Pfam" id="PF01676">
    <property type="entry name" value="Metalloenzyme"/>
    <property type="match status" value="1"/>
</dbReference>
<dbReference type="PIRSF" id="PIRSF001491">
    <property type="entry name" value="Ppentomutase"/>
    <property type="match status" value="1"/>
</dbReference>
<dbReference type="SUPFAM" id="SSF53649">
    <property type="entry name" value="Alkaline phosphatase-like"/>
    <property type="match status" value="1"/>
</dbReference>
<dbReference type="SUPFAM" id="SSF143856">
    <property type="entry name" value="DeoB insert domain-like"/>
    <property type="match status" value="1"/>
</dbReference>
<accession>A6WRB6</accession>
<gene>
    <name evidence="1" type="primary">deoB</name>
    <name type="ordered locus">Shew185_3228</name>
</gene>
<keyword id="KW-0963">Cytoplasm</keyword>
<keyword id="KW-0413">Isomerase</keyword>
<keyword id="KW-0464">Manganese</keyword>
<keyword id="KW-0479">Metal-binding</keyword>
<proteinExistence type="inferred from homology"/>
<name>DEOB_SHEB8</name>
<comment type="function">
    <text evidence="1">Isomerase that catalyzes the conversion of deoxy-ribose 1-phosphate (dRib-1-P) and ribose 1-phosphate (Rib-1-P) to deoxy-ribose 5-phosphate (dRib-5-P) and ribose 5-phosphate (Rib-5-P), respectively.</text>
</comment>
<comment type="catalytic activity">
    <reaction evidence="1">
        <text>2-deoxy-alpha-D-ribose 1-phosphate = 2-deoxy-D-ribose 5-phosphate</text>
        <dbReference type="Rhea" id="RHEA:27658"/>
        <dbReference type="ChEBI" id="CHEBI:57259"/>
        <dbReference type="ChEBI" id="CHEBI:62877"/>
        <dbReference type="EC" id="5.4.2.7"/>
    </reaction>
</comment>
<comment type="catalytic activity">
    <reaction evidence="1">
        <text>alpha-D-ribose 1-phosphate = D-ribose 5-phosphate</text>
        <dbReference type="Rhea" id="RHEA:18793"/>
        <dbReference type="ChEBI" id="CHEBI:57720"/>
        <dbReference type="ChEBI" id="CHEBI:78346"/>
        <dbReference type="EC" id="5.4.2.7"/>
    </reaction>
</comment>
<comment type="cofactor">
    <cofactor evidence="1">
        <name>Mn(2+)</name>
        <dbReference type="ChEBI" id="CHEBI:29035"/>
    </cofactor>
    <text evidence="1">Binds 2 manganese ions.</text>
</comment>
<comment type="pathway">
    <text evidence="1">Carbohydrate degradation; 2-deoxy-D-ribose 1-phosphate degradation; D-glyceraldehyde 3-phosphate and acetaldehyde from 2-deoxy-alpha-D-ribose 1-phosphate: step 1/2.</text>
</comment>
<comment type="subcellular location">
    <subcellularLocation>
        <location evidence="1">Cytoplasm</location>
    </subcellularLocation>
</comment>
<comment type="similarity">
    <text evidence="1">Belongs to the phosphopentomutase family.</text>
</comment>
<feature type="chain" id="PRO_1000046395" description="Phosphopentomutase">
    <location>
        <begin position="1"/>
        <end position="404"/>
    </location>
</feature>
<feature type="binding site" evidence="1">
    <location>
        <position position="10"/>
    </location>
    <ligand>
        <name>Mn(2+)</name>
        <dbReference type="ChEBI" id="CHEBI:29035"/>
        <label>1</label>
    </ligand>
</feature>
<feature type="binding site" evidence="1">
    <location>
        <position position="303"/>
    </location>
    <ligand>
        <name>Mn(2+)</name>
        <dbReference type="ChEBI" id="CHEBI:29035"/>
        <label>2</label>
    </ligand>
</feature>
<feature type="binding site" evidence="1">
    <location>
        <position position="308"/>
    </location>
    <ligand>
        <name>Mn(2+)</name>
        <dbReference type="ChEBI" id="CHEBI:29035"/>
        <label>2</label>
    </ligand>
</feature>
<feature type="binding site" evidence="1">
    <location>
        <position position="344"/>
    </location>
    <ligand>
        <name>Mn(2+)</name>
        <dbReference type="ChEBI" id="CHEBI:29035"/>
        <label>1</label>
    </ligand>
</feature>
<feature type="binding site" evidence="1">
    <location>
        <position position="345"/>
    </location>
    <ligand>
        <name>Mn(2+)</name>
        <dbReference type="ChEBI" id="CHEBI:29035"/>
        <label>1</label>
    </ligand>
</feature>
<feature type="binding site" evidence="1">
    <location>
        <position position="356"/>
    </location>
    <ligand>
        <name>Mn(2+)</name>
        <dbReference type="ChEBI" id="CHEBI:29035"/>
        <label>2</label>
    </ligand>
</feature>
<organism>
    <name type="scientific">Shewanella baltica (strain OS185)</name>
    <dbReference type="NCBI Taxonomy" id="402882"/>
    <lineage>
        <taxon>Bacteria</taxon>
        <taxon>Pseudomonadati</taxon>
        <taxon>Pseudomonadota</taxon>
        <taxon>Gammaproteobacteria</taxon>
        <taxon>Alteromonadales</taxon>
        <taxon>Shewanellaceae</taxon>
        <taxon>Shewanella</taxon>
    </lineage>
</organism>
<evidence type="ECO:0000255" key="1">
    <source>
        <dbReference type="HAMAP-Rule" id="MF_00740"/>
    </source>
</evidence>
<sequence length="404" mass="43555">MKRTIIMMLDSFGVGASADAASFGDVGSDTFGHIAKACAEGKADIGREGPLKLPNLARLGLGHAAMESTGAFAPGFGDNVELIGAYGHAQELSSGKDTPSGHWEMAGVPVLFEWGYFSEHQNSFPKELTDKILARAGLDGFLGNCHASGTTILEELGEEHMRSGKPIFYTSADSVFQIACHEETFGLDNLYRLCEITREELEPYNIGRVIARPFDGTGPSDFARTGNRKDYSLEPPAKTVLDKLKEAGGEVVSVGKIADIYAYCGITKKVKANGLEALFDATLAEVKSAGDNTIVFTNFVDFDSHYGHRRDVAGYAKGLEYFDARLPEMLALLGEDDLLILTADHGCDPTWQGTDHTREYVPVLAFGAGLKAGSLGRRKSFADIGQSIASHFKLEPMAYGESFL</sequence>